<protein>
    <recommendedName>
        <fullName>Uncharacterized protein YkkB</fullName>
    </recommendedName>
</protein>
<keyword id="KW-1185">Reference proteome</keyword>
<name>YKKB_BACSU</name>
<accession>P49855</accession>
<reference key="1">
    <citation type="journal article" date="1996" name="J. Bacteriol.">
        <title>Oxygen-controlled regulation of the flavohemoglobin gene in Bacillus subtilis.</title>
        <authorList>
            <person name="Lacelle M."/>
            <person name="Kumano M."/>
            <person name="Kurita K."/>
            <person name="Yamane K."/>
            <person name="Zuber P."/>
            <person name="Nakano M.M."/>
        </authorList>
    </citation>
    <scope>NUCLEOTIDE SEQUENCE [GENOMIC DNA]</scope>
    <source>
        <strain>168</strain>
    </source>
</reference>
<reference key="2">
    <citation type="submission" date="1997-11" db="EMBL/GenBank/DDBJ databases">
        <title>Sequence of the Bacillus subtilis genome between xlyA and ykoR.</title>
        <authorList>
            <person name="Devine K.M."/>
        </authorList>
    </citation>
    <scope>NUCLEOTIDE SEQUENCE [GENOMIC DNA]</scope>
    <source>
        <strain>168</strain>
    </source>
</reference>
<reference key="3">
    <citation type="journal article" date="1997" name="Nature">
        <title>The complete genome sequence of the Gram-positive bacterium Bacillus subtilis.</title>
        <authorList>
            <person name="Kunst F."/>
            <person name="Ogasawara N."/>
            <person name="Moszer I."/>
            <person name="Albertini A.M."/>
            <person name="Alloni G."/>
            <person name="Azevedo V."/>
            <person name="Bertero M.G."/>
            <person name="Bessieres P."/>
            <person name="Bolotin A."/>
            <person name="Borchert S."/>
            <person name="Borriss R."/>
            <person name="Boursier L."/>
            <person name="Brans A."/>
            <person name="Braun M."/>
            <person name="Brignell S.C."/>
            <person name="Bron S."/>
            <person name="Brouillet S."/>
            <person name="Bruschi C.V."/>
            <person name="Caldwell B."/>
            <person name="Capuano V."/>
            <person name="Carter N.M."/>
            <person name="Choi S.-K."/>
            <person name="Codani J.-J."/>
            <person name="Connerton I.F."/>
            <person name="Cummings N.J."/>
            <person name="Daniel R.A."/>
            <person name="Denizot F."/>
            <person name="Devine K.M."/>
            <person name="Duesterhoeft A."/>
            <person name="Ehrlich S.D."/>
            <person name="Emmerson P.T."/>
            <person name="Entian K.-D."/>
            <person name="Errington J."/>
            <person name="Fabret C."/>
            <person name="Ferrari E."/>
            <person name="Foulger D."/>
            <person name="Fritz C."/>
            <person name="Fujita M."/>
            <person name="Fujita Y."/>
            <person name="Fuma S."/>
            <person name="Galizzi A."/>
            <person name="Galleron N."/>
            <person name="Ghim S.-Y."/>
            <person name="Glaser P."/>
            <person name="Goffeau A."/>
            <person name="Golightly E.J."/>
            <person name="Grandi G."/>
            <person name="Guiseppi G."/>
            <person name="Guy B.J."/>
            <person name="Haga K."/>
            <person name="Haiech J."/>
            <person name="Harwood C.R."/>
            <person name="Henaut A."/>
            <person name="Hilbert H."/>
            <person name="Holsappel S."/>
            <person name="Hosono S."/>
            <person name="Hullo M.-F."/>
            <person name="Itaya M."/>
            <person name="Jones L.-M."/>
            <person name="Joris B."/>
            <person name="Karamata D."/>
            <person name="Kasahara Y."/>
            <person name="Klaerr-Blanchard M."/>
            <person name="Klein C."/>
            <person name="Kobayashi Y."/>
            <person name="Koetter P."/>
            <person name="Koningstein G."/>
            <person name="Krogh S."/>
            <person name="Kumano M."/>
            <person name="Kurita K."/>
            <person name="Lapidus A."/>
            <person name="Lardinois S."/>
            <person name="Lauber J."/>
            <person name="Lazarevic V."/>
            <person name="Lee S.-M."/>
            <person name="Levine A."/>
            <person name="Liu H."/>
            <person name="Masuda S."/>
            <person name="Mauel C."/>
            <person name="Medigue C."/>
            <person name="Medina N."/>
            <person name="Mellado R.P."/>
            <person name="Mizuno M."/>
            <person name="Moestl D."/>
            <person name="Nakai S."/>
            <person name="Noback M."/>
            <person name="Noone D."/>
            <person name="O'Reilly M."/>
            <person name="Ogawa K."/>
            <person name="Ogiwara A."/>
            <person name="Oudega B."/>
            <person name="Park S.-H."/>
            <person name="Parro V."/>
            <person name="Pohl T.M."/>
            <person name="Portetelle D."/>
            <person name="Porwollik S."/>
            <person name="Prescott A.M."/>
            <person name="Presecan E."/>
            <person name="Pujic P."/>
            <person name="Purnelle B."/>
            <person name="Rapoport G."/>
            <person name="Rey M."/>
            <person name="Reynolds S."/>
            <person name="Rieger M."/>
            <person name="Rivolta C."/>
            <person name="Rocha E."/>
            <person name="Roche B."/>
            <person name="Rose M."/>
            <person name="Sadaie Y."/>
            <person name="Sato T."/>
            <person name="Scanlan E."/>
            <person name="Schleich S."/>
            <person name="Schroeter R."/>
            <person name="Scoffone F."/>
            <person name="Sekiguchi J."/>
            <person name="Sekowska A."/>
            <person name="Seror S.J."/>
            <person name="Serror P."/>
            <person name="Shin B.-S."/>
            <person name="Soldo B."/>
            <person name="Sorokin A."/>
            <person name="Tacconi E."/>
            <person name="Takagi T."/>
            <person name="Takahashi H."/>
            <person name="Takemaru K."/>
            <person name="Takeuchi M."/>
            <person name="Tamakoshi A."/>
            <person name="Tanaka T."/>
            <person name="Terpstra P."/>
            <person name="Tognoni A."/>
            <person name="Tosato V."/>
            <person name="Uchiyama S."/>
            <person name="Vandenbol M."/>
            <person name="Vannier F."/>
            <person name="Vassarotti A."/>
            <person name="Viari A."/>
            <person name="Wambutt R."/>
            <person name="Wedler E."/>
            <person name="Wedler H."/>
            <person name="Weitzenegger T."/>
            <person name="Winters P."/>
            <person name="Wipat A."/>
            <person name="Yamamoto H."/>
            <person name="Yamane K."/>
            <person name="Yasumoto K."/>
            <person name="Yata K."/>
            <person name="Yoshida K."/>
            <person name="Yoshikawa H.-F."/>
            <person name="Zumstein E."/>
            <person name="Yoshikawa H."/>
            <person name="Danchin A."/>
        </authorList>
    </citation>
    <scope>NUCLEOTIDE SEQUENCE [LARGE SCALE GENOMIC DNA]</scope>
    <source>
        <strain>168</strain>
    </source>
</reference>
<gene>
    <name type="primary">ykkB</name>
    <name type="ordered locus">BSU13080</name>
</gene>
<sequence length="172" mass="20088">MNAKTKLVTDRIRLRCMEDRDQATLFGLLFNDPDVMTYYSGLKDKRQTREWVNWNQRNEKGYGVSLWIAEDKRTGEFLGQCGIVPQQIENQTVMEIGYMFARRHWGNGYAQEAARACLDYGFNERQFGKMAALIDPGNKASIRVAEKIGMHYSKTIRKWNKPIAVYERKSYN</sequence>
<evidence type="ECO:0000255" key="1">
    <source>
        <dbReference type="PROSITE-ProRule" id="PRU00532"/>
    </source>
</evidence>
<organism>
    <name type="scientific">Bacillus subtilis (strain 168)</name>
    <dbReference type="NCBI Taxonomy" id="224308"/>
    <lineage>
        <taxon>Bacteria</taxon>
        <taxon>Bacillati</taxon>
        <taxon>Bacillota</taxon>
        <taxon>Bacilli</taxon>
        <taxon>Bacillales</taxon>
        <taxon>Bacillaceae</taxon>
        <taxon>Bacillus</taxon>
    </lineage>
</organism>
<feature type="chain" id="PRO_0000049604" description="Uncharacterized protein YkkB">
    <location>
        <begin position="1"/>
        <end position="172"/>
    </location>
</feature>
<feature type="domain" description="N-acetyltransferase" evidence="1">
    <location>
        <begin position="12"/>
        <end position="172"/>
    </location>
</feature>
<dbReference type="EMBL" id="D78189">
    <property type="protein sequence ID" value="BAA11261.1"/>
    <property type="molecule type" value="Genomic_DNA"/>
</dbReference>
<dbReference type="EMBL" id="AJ002571">
    <property type="protein sequence ID" value="CAA05587.1"/>
    <property type="molecule type" value="Genomic_DNA"/>
</dbReference>
<dbReference type="EMBL" id="AL009126">
    <property type="protein sequence ID" value="CAB13165.1"/>
    <property type="molecule type" value="Genomic_DNA"/>
</dbReference>
<dbReference type="PIR" id="H69856">
    <property type="entry name" value="H69856"/>
</dbReference>
<dbReference type="RefSeq" id="NP_389191.1">
    <property type="nucleotide sequence ID" value="NC_000964.3"/>
</dbReference>
<dbReference type="RefSeq" id="WP_003244793.1">
    <property type="nucleotide sequence ID" value="NZ_OZ025638.1"/>
</dbReference>
<dbReference type="SMR" id="P49855"/>
<dbReference type="FunCoup" id="P49855">
    <property type="interactions" value="98"/>
</dbReference>
<dbReference type="STRING" id="224308.BSU13080"/>
<dbReference type="PaxDb" id="224308-BSU13080"/>
<dbReference type="EnsemblBacteria" id="CAB13165">
    <property type="protein sequence ID" value="CAB13165"/>
    <property type="gene ID" value="BSU_13080"/>
</dbReference>
<dbReference type="GeneID" id="939859"/>
<dbReference type="KEGG" id="bsu:BSU13080"/>
<dbReference type="PATRIC" id="fig|224308.179.peg.1420"/>
<dbReference type="eggNOG" id="COG1670">
    <property type="taxonomic scope" value="Bacteria"/>
</dbReference>
<dbReference type="InParanoid" id="P49855"/>
<dbReference type="OrthoDB" id="9798081at2"/>
<dbReference type="PhylomeDB" id="P49855"/>
<dbReference type="BioCyc" id="BSUB:BSU13080-MONOMER"/>
<dbReference type="Proteomes" id="UP000001570">
    <property type="component" value="Chromosome"/>
</dbReference>
<dbReference type="GO" id="GO:0016747">
    <property type="term" value="F:acyltransferase activity, transferring groups other than amino-acyl groups"/>
    <property type="evidence" value="ECO:0007669"/>
    <property type="project" value="InterPro"/>
</dbReference>
<dbReference type="Gene3D" id="3.40.630.30">
    <property type="match status" value="1"/>
</dbReference>
<dbReference type="InterPro" id="IPR016181">
    <property type="entry name" value="Acyl_CoA_acyltransferase"/>
</dbReference>
<dbReference type="InterPro" id="IPR000182">
    <property type="entry name" value="GNAT_dom"/>
</dbReference>
<dbReference type="InterPro" id="IPR051531">
    <property type="entry name" value="N-acetyltransferase"/>
</dbReference>
<dbReference type="PANTHER" id="PTHR43792">
    <property type="entry name" value="GNAT FAMILY, PUTATIVE (AFU_ORTHOLOGUE AFUA_3G00765)-RELATED-RELATED"/>
    <property type="match status" value="1"/>
</dbReference>
<dbReference type="PANTHER" id="PTHR43792:SF1">
    <property type="entry name" value="N-ACETYLTRANSFERASE DOMAIN-CONTAINING PROTEIN"/>
    <property type="match status" value="1"/>
</dbReference>
<dbReference type="Pfam" id="PF13302">
    <property type="entry name" value="Acetyltransf_3"/>
    <property type="match status" value="1"/>
</dbReference>
<dbReference type="SUPFAM" id="SSF55729">
    <property type="entry name" value="Acyl-CoA N-acyltransferases (Nat)"/>
    <property type="match status" value="1"/>
</dbReference>
<dbReference type="PROSITE" id="PS51186">
    <property type="entry name" value="GNAT"/>
    <property type="match status" value="1"/>
</dbReference>
<proteinExistence type="predicted"/>